<reference key="1">
    <citation type="journal article" date="1993" name="Mamm. Genome">
        <title>The cat RDS transcript: candidate gene analysis and phylogenetic sequence analysis.</title>
        <authorList>
            <person name="Gorin M.B."/>
            <person name="Snyder S."/>
            <person name="To A.C."/>
            <person name="Narfstrom K."/>
            <person name="Curtis R."/>
        </authorList>
    </citation>
    <scope>NUCLEOTIDE SEQUENCE [MRNA]</scope>
    <source>
        <strain>Abyssinian</strain>
    </source>
</reference>
<sequence>MALLKVKFDQKKRVKLAQGLWLMNWLSVLAGIVIFSLGLFLKIELRKRSDVMNNSESHFVPNSLIGMGVLSCVFNSLAGKICYDALDPSKYAKWKPWLKSYLVVCVLFNIVLFLVALCCFLMRGSLESTLAQGLKNGMKYYRDTDTPGRCFMKKTIDLLQIEFKCCGNNGFRDWFEIQWISNRYLDFSSKEVKDRIKSNVDGRYLVDGVPFSCCNPNSPRPCIQYQLTNNSAHYSYDHQTEELNLWVRGCRAALLSYYGSLMNSMGAVTLLVWLFEVSITIGLRYLHTALEGVSNPEDLECESEGWLLEKSVSETWKAFLESLKKLGKSNQVEAEGADAGQAPEAG</sequence>
<evidence type="ECO:0000250" key="1"/>
<evidence type="ECO:0000250" key="2">
    <source>
        <dbReference type="UniProtKB" id="P15499"/>
    </source>
</evidence>
<evidence type="ECO:0000250" key="3">
    <source>
        <dbReference type="UniProtKB" id="P17810"/>
    </source>
</evidence>
<evidence type="ECO:0000255" key="4"/>
<evidence type="ECO:0000305" key="5"/>
<feature type="chain" id="PRO_0000168104" description="Peripherin-2">
    <location>
        <begin position="1"/>
        <end position="346"/>
    </location>
</feature>
<feature type="topological domain" description="Cytoplasmic" evidence="4">
    <location>
        <begin position="1"/>
        <end position="24"/>
    </location>
</feature>
<feature type="transmembrane region" description="Helical" evidence="4">
    <location>
        <begin position="25"/>
        <end position="43"/>
    </location>
</feature>
<feature type="topological domain" description="Lumenal" evidence="4">
    <location>
        <begin position="44"/>
        <end position="61"/>
    </location>
</feature>
<feature type="transmembrane region" description="Helical" evidence="4">
    <location>
        <begin position="62"/>
        <end position="80"/>
    </location>
</feature>
<feature type="topological domain" description="Cytoplasmic" evidence="4">
    <location>
        <begin position="81"/>
        <end position="99"/>
    </location>
</feature>
<feature type="transmembrane region" description="Helical" evidence="4">
    <location>
        <begin position="100"/>
        <end position="123"/>
    </location>
</feature>
<feature type="topological domain" description="Lumenal" evidence="4">
    <location>
        <begin position="124"/>
        <end position="264"/>
    </location>
</feature>
<feature type="transmembrane region" description="Helical" evidence="4">
    <location>
        <begin position="265"/>
        <end position="290"/>
    </location>
</feature>
<feature type="topological domain" description="Cytoplasmic" evidence="4">
    <location>
        <begin position="291"/>
        <end position="346"/>
    </location>
</feature>
<feature type="region of interest" description="Interaction with MREG" evidence="1">
    <location>
        <begin position="341"/>
        <end position="346"/>
    </location>
</feature>
<feature type="glycosylation site" description="N-linked (GlcNAc...) asparagine" evidence="4">
    <location>
        <position position="53"/>
    </location>
</feature>
<feature type="glycosylation site" description="N-linked (GlcNAc...) asparagine" evidence="4">
    <location>
        <position position="229"/>
    </location>
</feature>
<feature type="disulfide bond" description="Interchain (with ROM1)" evidence="2">
    <location>
        <position position="150"/>
    </location>
</feature>
<protein>
    <recommendedName>
        <fullName>Peripherin-2</fullName>
    </recommendedName>
    <alternativeName>
        <fullName>Retinal degeneration slow protein</fullName>
    </alternativeName>
</protein>
<accession>P35906</accession>
<organism>
    <name type="scientific">Felis catus</name>
    <name type="common">Cat</name>
    <name type="synonym">Felis silvestris catus</name>
    <dbReference type="NCBI Taxonomy" id="9685"/>
    <lineage>
        <taxon>Eukaryota</taxon>
        <taxon>Metazoa</taxon>
        <taxon>Chordata</taxon>
        <taxon>Craniata</taxon>
        <taxon>Vertebrata</taxon>
        <taxon>Euteleostomi</taxon>
        <taxon>Mammalia</taxon>
        <taxon>Eutheria</taxon>
        <taxon>Laurasiatheria</taxon>
        <taxon>Carnivora</taxon>
        <taxon>Feliformia</taxon>
        <taxon>Felidae</taxon>
        <taxon>Felinae</taxon>
        <taxon>Felis</taxon>
    </lineage>
</organism>
<gene>
    <name type="primary">PRPH2</name>
    <name type="synonym">RDS</name>
</gene>
<comment type="function">
    <text evidence="2">Essential for retina photoreceptor outer segment disk morphogenesis, may also play a role with ROM1 in the maintenance of outer segment disk structure (By similarity). Required for the maintenance of retinal outer nuclear layer thickness (By similarity). Required for the correct development and organization of the photoreceptor inner segment (By similarity).</text>
</comment>
<comment type="subunit">
    <text evidence="2 3">Homodimer; disulfide-linked (By similarity). Forms a homotetramer (By similarity). Forms a heterotetramer with ROM1 (By similarity). Homotetramer and heterotetramer core complexes go on to form higher order complexes by formation of intermolecular disulfide bonds (By similarity). Interacts with MREG (By similarity). Interacts with STX3 (By similarity). Interacts with SNAP25 (By similarity).</text>
</comment>
<comment type="subcellular location">
    <subcellularLocation>
        <location evidence="3">Membrane</location>
        <topology evidence="4">Multi-pass membrane protein</topology>
    </subcellularLocation>
    <subcellularLocation>
        <location evidence="2">Cell projection</location>
        <location evidence="2">Cilium</location>
        <location evidence="2">Photoreceptor outer segment</location>
    </subcellularLocation>
    <subcellularLocation>
        <location evidence="2">Photoreceptor inner segment</location>
    </subcellularLocation>
</comment>
<comment type="tissue specificity">
    <text>Retina (photoreceptor). In rim region of ROS (rod outer segment) disks.</text>
</comment>
<comment type="similarity">
    <text evidence="5">Belongs to the PRPH2/ROM1 family.</text>
</comment>
<name>PRPH2_FELCA</name>
<dbReference type="EMBL" id="M94047">
    <property type="protein sequence ID" value="AAA19175.1"/>
    <property type="molecule type" value="mRNA"/>
</dbReference>
<dbReference type="PIR" id="I46087">
    <property type="entry name" value="I46087"/>
</dbReference>
<dbReference type="RefSeq" id="NP_001036033.1">
    <property type="nucleotide sequence ID" value="NM_001042568.1"/>
</dbReference>
<dbReference type="SMR" id="P35906"/>
<dbReference type="FunCoup" id="P35906">
    <property type="interactions" value="8"/>
</dbReference>
<dbReference type="STRING" id="9685.ENSFCAP00000003818"/>
<dbReference type="GlyCosmos" id="P35906">
    <property type="glycosylation" value="2 sites, No reported glycans"/>
</dbReference>
<dbReference type="PaxDb" id="9685-ENSFCAP00000003818"/>
<dbReference type="Ensembl" id="ENSFCAT00000004145.4">
    <property type="protein sequence ID" value="ENSFCAP00000003818.2"/>
    <property type="gene ID" value="ENSFCAG00000004144.4"/>
</dbReference>
<dbReference type="GeneID" id="727697"/>
<dbReference type="KEGG" id="fca:727697"/>
<dbReference type="CTD" id="5961"/>
<dbReference type="VGNC" id="VGNC:69278">
    <property type="gene designation" value="PRPH2"/>
</dbReference>
<dbReference type="eggNOG" id="KOG3882">
    <property type="taxonomic scope" value="Eukaryota"/>
</dbReference>
<dbReference type="GeneTree" id="ENSGT00940000157303"/>
<dbReference type="HOGENOM" id="CLU_068903_0_0_1"/>
<dbReference type="InParanoid" id="P35906"/>
<dbReference type="OMA" id="LCCFLMR"/>
<dbReference type="OrthoDB" id="9836210at2759"/>
<dbReference type="TreeFam" id="TF331684"/>
<dbReference type="Proteomes" id="UP000011712">
    <property type="component" value="Chromosome B2"/>
</dbReference>
<dbReference type="Bgee" id="ENSFCAG00000004144">
    <property type="expression patterns" value="Expressed in eyeball of camera-type eye and 4 other cell types or tissues"/>
</dbReference>
<dbReference type="GO" id="GO:0001917">
    <property type="term" value="C:photoreceptor inner segment"/>
    <property type="evidence" value="ECO:0007669"/>
    <property type="project" value="UniProtKB-SubCell"/>
</dbReference>
<dbReference type="GO" id="GO:0001750">
    <property type="term" value="C:photoreceptor outer segment"/>
    <property type="evidence" value="ECO:0007669"/>
    <property type="project" value="UniProtKB-SubCell"/>
</dbReference>
<dbReference type="GO" id="GO:0005886">
    <property type="term" value="C:plasma membrane"/>
    <property type="evidence" value="ECO:0000318"/>
    <property type="project" value="GO_Central"/>
</dbReference>
<dbReference type="GO" id="GO:0042803">
    <property type="term" value="F:protein homodimerization activity"/>
    <property type="evidence" value="ECO:0007669"/>
    <property type="project" value="Ensembl"/>
</dbReference>
<dbReference type="GO" id="GO:0007155">
    <property type="term" value="P:cell adhesion"/>
    <property type="evidence" value="ECO:0007669"/>
    <property type="project" value="UniProtKB-KW"/>
</dbReference>
<dbReference type="GO" id="GO:0050908">
    <property type="term" value="P:detection of light stimulus involved in visual perception"/>
    <property type="evidence" value="ECO:0007669"/>
    <property type="project" value="Ensembl"/>
</dbReference>
<dbReference type="GO" id="GO:0035845">
    <property type="term" value="P:photoreceptor cell outer segment organization"/>
    <property type="evidence" value="ECO:0007669"/>
    <property type="project" value="Ensembl"/>
</dbReference>
<dbReference type="GO" id="GO:0051291">
    <property type="term" value="P:protein heterooligomerization"/>
    <property type="evidence" value="ECO:0007669"/>
    <property type="project" value="Ensembl"/>
</dbReference>
<dbReference type="GO" id="GO:0051260">
    <property type="term" value="P:protein homooligomerization"/>
    <property type="evidence" value="ECO:0007669"/>
    <property type="project" value="Ensembl"/>
</dbReference>
<dbReference type="GO" id="GO:0072659">
    <property type="term" value="P:protein localization to plasma membrane"/>
    <property type="evidence" value="ECO:0000318"/>
    <property type="project" value="GO_Central"/>
</dbReference>
<dbReference type="GO" id="GO:0051604">
    <property type="term" value="P:protein maturation"/>
    <property type="evidence" value="ECO:0000318"/>
    <property type="project" value="GO_Central"/>
</dbReference>
<dbReference type="GO" id="GO:0060041">
    <property type="term" value="P:retina development in camera-type eye"/>
    <property type="evidence" value="ECO:0007669"/>
    <property type="project" value="Ensembl"/>
</dbReference>
<dbReference type="CDD" id="cd03162">
    <property type="entry name" value="peripherin_like_LEL"/>
    <property type="match status" value="1"/>
</dbReference>
<dbReference type="FunFam" id="1.10.1450.10:FF:000002">
    <property type="entry name" value="Retinal outer segment membrane protein 1"/>
    <property type="match status" value="1"/>
</dbReference>
<dbReference type="Gene3D" id="1.10.1450.10">
    <property type="entry name" value="Tetraspanin"/>
    <property type="match status" value="1"/>
</dbReference>
<dbReference type="InterPro" id="IPR000830">
    <property type="entry name" value="Peripherin/rom-1"/>
</dbReference>
<dbReference type="InterPro" id="IPR018498">
    <property type="entry name" value="Peripherin/rom-1_CS"/>
</dbReference>
<dbReference type="InterPro" id="IPR042026">
    <property type="entry name" value="Peripherin_LEL"/>
</dbReference>
<dbReference type="InterPro" id="IPR018499">
    <property type="entry name" value="Tetraspanin/Peripherin"/>
</dbReference>
<dbReference type="InterPro" id="IPR008952">
    <property type="entry name" value="Tetraspanin_EC2_sf"/>
</dbReference>
<dbReference type="PANTHER" id="PTHR19282:SF202">
    <property type="entry name" value="PERIPHERIN-2"/>
    <property type="match status" value="1"/>
</dbReference>
<dbReference type="PANTHER" id="PTHR19282">
    <property type="entry name" value="TETRASPANIN"/>
    <property type="match status" value="1"/>
</dbReference>
<dbReference type="Pfam" id="PF00335">
    <property type="entry name" value="Tetraspanin"/>
    <property type="match status" value="1"/>
</dbReference>
<dbReference type="PRINTS" id="PR00218">
    <property type="entry name" value="PERIPHERNRDS"/>
</dbReference>
<dbReference type="SUPFAM" id="SSF48652">
    <property type="entry name" value="Tetraspanin"/>
    <property type="match status" value="1"/>
</dbReference>
<dbReference type="PROSITE" id="PS00930">
    <property type="entry name" value="RDS_ROM1"/>
    <property type="match status" value="1"/>
</dbReference>
<keyword id="KW-0130">Cell adhesion</keyword>
<keyword id="KW-0966">Cell projection</keyword>
<keyword id="KW-1015">Disulfide bond</keyword>
<keyword id="KW-0325">Glycoprotein</keyword>
<keyword id="KW-0472">Membrane</keyword>
<keyword id="KW-1185">Reference proteome</keyword>
<keyword id="KW-0716">Sensory transduction</keyword>
<keyword id="KW-0812">Transmembrane</keyword>
<keyword id="KW-1133">Transmembrane helix</keyword>
<keyword id="KW-0844">Vision</keyword>
<proteinExistence type="evidence at transcript level"/>